<comment type="function">
    <text evidence="1">In its thiocarboxylated form (CysO-COSH), is the sulfur donor in the CysM-dependent cysteine biosynthetic pathway.</text>
</comment>
<comment type="pathway">
    <text>Amino-acid biosynthesis; L-cysteine biosynthesis.</text>
</comment>
<comment type="PTM">
    <text evidence="1">Thiocarboxylated by MoeZ.</text>
</comment>
<comment type="PTM">
    <text evidence="1">A covalent CysO-cysteine adduct is formed by the action of CysM. The structure of the adduct seems to be first a S-(glycyl)-cysteinate which leads to a N-(glycyl)-cysteinate after a S-&gt;N acyl shift (By similarity).</text>
</comment>
<comment type="similarity">
    <text evidence="2">Belongs to the sulfur carrier protein CysO family.</text>
</comment>
<protein>
    <recommendedName>
        <fullName>Sulfur carrier protein CysO</fullName>
    </recommendedName>
    <alternativeName>
        <fullName>9.5 kDa culture filtrate antigen cfp10A</fullName>
    </alternativeName>
</protein>
<organism>
    <name type="scientific">Mycobacterium bovis (strain ATCC BAA-935 / AF2122/97)</name>
    <dbReference type="NCBI Taxonomy" id="233413"/>
    <lineage>
        <taxon>Bacteria</taxon>
        <taxon>Bacillati</taxon>
        <taxon>Actinomycetota</taxon>
        <taxon>Actinomycetes</taxon>
        <taxon>Mycobacteriales</taxon>
        <taxon>Mycobacteriaceae</taxon>
        <taxon>Mycobacterium</taxon>
        <taxon>Mycobacterium tuberculosis complex</taxon>
    </lineage>
</organism>
<evidence type="ECO:0000250" key="1"/>
<evidence type="ECO:0000305" key="2"/>
<feature type="chain" id="PRO_0000159083" description="Sulfur carrier protein CysO">
    <location>
        <begin position="1"/>
        <end position="93"/>
    </location>
</feature>
<feature type="modified residue" description="1-thioglycine; alternate" evidence="1">
    <location>
        <position position="93"/>
    </location>
</feature>
<feature type="modified residue" description="CysO-cysteine adduct; alternate" evidence="1">
    <location>
        <position position="93"/>
    </location>
</feature>
<proteinExistence type="inferred from homology"/>
<dbReference type="EMBL" id="LT708304">
    <property type="protein sequence ID" value="SIT99973.1"/>
    <property type="molecule type" value="Genomic_DNA"/>
</dbReference>
<dbReference type="RefSeq" id="NP_855024.1">
    <property type="nucleotide sequence ID" value="NC_002945.3"/>
</dbReference>
<dbReference type="RefSeq" id="WP_003406910.1">
    <property type="nucleotide sequence ID" value="NC_002945.4"/>
</dbReference>
<dbReference type="SMR" id="P0A647"/>
<dbReference type="GeneID" id="45425313"/>
<dbReference type="KEGG" id="mbo:BQ2027_MB1370"/>
<dbReference type="PATRIC" id="fig|233413.5.peg.1502"/>
<dbReference type="UniPathway" id="UPA00136"/>
<dbReference type="Proteomes" id="UP000001419">
    <property type="component" value="Chromosome"/>
</dbReference>
<dbReference type="GO" id="GO:0019344">
    <property type="term" value="P:cysteine biosynthetic process"/>
    <property type="evidence" value="ECO:0007669"/>
    <property type="project" value="UniProtKB-UniPathway"/>
</dbReference>
<dbReference type="CDD" id="cd17074">
    <property type="entry name" value="Ubl_CysO_like"/>
    <property type="match status" value="1"/>
</dbReference>
<dbReference type="FunFam" id="3.10.20.30:FF:000038">
    <property type="entry name" value="Molybdopterin synthase sulfur carrier subunit"/>
    <property type="match status" value="1"/>
</dbReference>
<dbReference type="Gene3D" id="3.10.20.30">
    <property type="match status" value="1"/>
</dbReference>
<dbReference type="InterPro" id="IPR012675">
    <property type="entry name" value="Beta-grasp_dom_sf"/>
</dbReference>
<dbReference type="InterPro" id="IPR016155">
    <property type="entry name" value="Mopterin_synth/thiamin_S_b"/>
</dbReference>
<dbReference type="InterPro" id="IPR052045">
    <property type="entry name" value="Sulfur_Carrier/Prot_Modifier"/>
</dbReference>
<dbReference type="InterPro" id="IPR003749">
    <property type="entry name" value="ThiS/MoaD-like"/>
</dbReference>
<dbReference type="PANTHER" id="PTHR38031:SF1">
    <property type="entry name" value="SULFUR CARRIER PROTEIN CYSO"/>
    <property type="match status" value="1"/>
</dbReference>
<dbReference type="PANTHER" id="PTHR38031">
    <property type="entry name" value="SULFUR CARRIER PROTEIN SLR0821-RELATED"/>
    <property type="match status" value="1"/>
</dbReference>
<dbReference type="Pfam" id="PF02597">
    <property type="entry name" value="ThiS"/>
    <property type="match status" value="1"/>
</dbReference>
<dbReference type="SUPFAM" id="SSF54285">
    <property type="entry name" value="MoaD/ThiS"/>
    <property type="match status" value="1"/>
</dbReference>
<name>CYSO_MYCBO</name>
<accession>P0A647</accession>
<accession>A0A1R3Y065</accession>
<accession>Q10646</accession>
<accession>X2BHE1</accession>
<reference key="1">
    <citation type="journal article" date="2003" name="Proc. Natl. Acad. Sci. U.S.A.">
        <title>The complete genome sequence of Mycobacterium bovis.</title>
        <authorList>
            <person name="Garnier T."/>
            <person name="Eiglmeier K."/>
            <person name="Camus J.-C."/>
            <person name="Medina N."/>
            <person name="Mansoor H."/>
            <person name="Pryor M."/>
            <person name="Duthoy S."/>
            <person name="Grondin S."/>
            <person name="Lacroix C."/>
            <person name="Monsempe C."/>
            <person name="Simon S."/>
            <person name="Harris B."/>
            <person name="Atkin R."/>
            <person name="Doggett J."/>
            <person name="Mayes R."/>
            <person name="Keating L."/>
            <person name="Wheeler P.R."/>
            <person name="Parkhill J."/>
            <person name="Barrell B.G."/>
            <person name="Cole S.T."/>
            <person name="Gordon S.V."/>
            <person name="Hewinson R.G."/>
        </authorList>
    </citation>
    <scope>NUCLEOTIDE SEQUENCE [LARGE SCALE GENOMIC DNA]</scope>
    <source>
        <strain>ATCC BAA-935 / AF2122/97</strain>
    </source>
</reference>
<reference key="2">
    <citation type="journal article" date="2017" name="Genome Announc.">
        <title>Updated reference genome sequence and annotation of Mycobacterium bovis AF2122/97.</title>
        <authorList>
            <person name="Malone K.M."/>
            <person name="Farrell D."/>
            <person name="Stuber T.P."/>
            <person name="Schubert O.T."/>
            <person name="Aebersold R."/>
            <person name="Robbe-Austerman S."/>
            <person name="Gordon S.V."/>
        </authorList>
    </citation>
    <scope>NUCLEOTIDE SEQUENCE [LARGE SCALE GENOMIC DNA]</scope>
    <scope>GENOME REANNOTATION</scope>
    <source>
        <strain>ATCC BAA-935 / AF2122/97</strain>
    </source>
</reference>
<keyword id="KW-0028">Amino-acid biosynthesis</keyword>
<keyword id="KW-0198">Cysteine biosynthesis</keyword>
<keyword id="KW-1185">Reference proteome</keyword>
<sequence length="93" mass="9557">MNVTVSIPTILRPHTGGQKSVSASGDTLGAVISDLEANYSGISERLMDPSSPGKLHRFVNIYVNDEDVRFSGGLATAIADGDSVTILPAVAGG</sequence>
<gene>
    <name type="primary">cysO</name>
    <name type="synonym">cfp10A</name>
    <name type="ordered locus">BQ2027_MB1370</name>
</gene>